<protein>
    <recommendedName>
        <fullName>DNA mismatch repair protein MLH3</fullName>
    </recommendedName>
    <alternativeName>
        <fullName>MutL protein homolog 3</fullName>
    </alternativeName>
</protein>
<comment type="function">
    <text evidence="1 2 3">Involved in DNA mismatch repair (MMR), correcting insertion-deletion loops (IDLs) resulting from DNA replication, DNA damage or from recombination events between non-identical sequences during meiosis. Component of the MutLbeta heterodimer, which probably forms a ternary complex with the MutSbeta heterodimer that initially recognizes the DNA mismatches. This complex is thought to be responsible for directing the downstream MMR events, including strand discrimination, excision, and resynthesis. Plays a major role in promoting meiotic crossing-over and is involved in maintaining the genetic stability of simple sequence repeats by correction of frameshift intermediates.</text>
</comment>
<comment type="subunit">
    <text>Heterodimer of MLH1 and MLH3, called MutLbeta, which is involved in correction of a specific subset of IDLs when associated with MutSbeta. Forms a ternary complex with a SGS1-TOP3 heterodimer during meiosis.</text>
</comment>
<comment type="interaction">
    <interactant intactId="EBI-31634">
        <id>Q12083</id>
    </interactant>
    <interactant intactId="EBI-11003">
        <id>P38920</id>
        <label>MLH1</label>
    </interactant>
    <organismsDiffer>false</organismsDiffer>
    <experiments>5</experiments>
</comment>
<comment type="subcellular location">
    <subcellularLocation>
        <location evidence="4">Nucleus</location>
    </subcellularLocation>
</comment>
<comment type="similarity">
    <text evidence="4">Belongs to the DNA mismatch repair MutL/HexB family.</text>
</comment>
<gene>
    <name type="primary">MLH3</name>
    <name type="ordered locus">YPL164C</name>
    <name type="ORF">P2550</name>
</gene>
<organism>
    <name type="scientific">Saccharomyces cerevisiae (strain ATCC 204508 / S288c)</name>
    <name type="common">Baker's yeast</name>
    <dbReference type="NCBI Taxonomy" id="559292"/>
    <lineage>
        <taxon>Eukaryota</taxon>
        <taxon>Fungi</taxon>
        <taxon>Dikarya</taxon>
        <taxon>Ascomycota</taxon>
        <taxon>Saccharomycotina</taxon>
        <taxon>Saccharomycetes</taxon>
        <taxon>Saccharomycetales</taxon>
        <taxon>Saccharomycetaceae</taxon>
        <taxon>Saccharomyces</taxon>
    </lineage>
</organism>
<sequence>MSQHIRKLDSDVSERLKSQACTVSLASAVREIVQNSVDAHATTIDVMIDLPNLSFAVYDDGIGLTRSDLNILATQNYTSKIRKMNDLVTMKTYGYRGDALYSISNVSNLFVCSKKKDYNSAWMRKFPSKSVMLSENTILPIDPFWKICPWSRTKSGTVVIVEDMLYNLPVRRRILKEEPPFKTFNTIKADMLQILVMHPMISLNVQYTDKLRINTEVLFRSKNITEGLTKHQQMSQVLRNVFGAIIPPDMLKKVSLKFNEYQIEGIISKMPVGLKDLQFIYINGRRYADSAFQGYVDSLFQAQDFGEKGMSLLKTKSVGKPYRSHPVFILDVRCPQTIDDLLQDPAKKIVKPSHIRTIEPLIVKTIRSFLTFQGYLTPDKSDSSFEIVNCSQKTATLPDSRIQISKRNQVLNSKMKIARINSYIGKPAVNGCRINNSTINYEKIKNIRIDGQKSRLRNKLSSRPYDSGFTEDYDSIGKTITDFSISRSVLAKYEVINQVDKKFILIRCLDQSIHNCPLLVLVDQHACDERIRLEELFYSLLTEVVTGTFVARDLKDCCIEVDRTEADLFKHYQSEFKKWGIGYETIEGTMETSLLEIKTLPEMLTSKYNGDKDYLKMVLLQHAHDLKDFKKLPMDLSHFENYTSVDKLYWWKYSSCVPTVFHEILNSKACRSAVMFGDELTRQECIILISKLSRCHNPFECAHGRPSMVPIAELK</sequence>
<evidence type="ECO:0000269" key="1">
    <source>
    </source>
</evidence>
<evidence type="ECO:0000269" key="2">
    <source>
    </source>
</evidence>
<evidence type="ECO:0000269" key="3">
    <source>
    </source>
</evidence>
<evidence type="ECO:0000305" key="4"/>
<evidence type="ECO:0007829" key="5">
    <source>
        <dbReference type="PDB" id="6RMN"/>
    </source>
</evidence>
<evidence type="ECO:0007829" key="6">
    <source>
        <dbReference type="PDB" id="6SNS"/>
    </source>
</evidence>
<feature type="chain" id="PRO_0000245570" description="DNA mismatch repair protein MLH3">
    <location>
        <begin position="1"/>
        <end position="715"/>
    </location>
</feature>
<feature type="helix" evidence="5">
    <location>
        <begin position="481"/>
        <end position="491"/>
    </location>
</feature>
<feature type="strand" evidence="5">
    <location>
        <begin position="494"/>
        <end position="499"/>
    </location>
</feature>
<feature type="turn" evidence="5">
    <location>
        <begin position="500"/>
        <end position="502"/>
    </location>
</feature>
<feature type="strand" evidence="5">
    <location>
        <begin position="503"/>
        <end position="507"/>
    </location>
</feature>
<feature type="strand" evidence="5">
    <location>
        <begin position="519"/>
        <end position="523"/>
    </location>
</feature>
<feature type="helix" evidence="5">
    <location>
        <begin position="524"/>
        <end position="545"/>
    </location>
</feature>
<feature type="strand" evidence="5">
    <location>
        <begin position="558"/>
        <end position="561"/>
    </location>
</feature>
<feature type="helix" evidence="5">
    <location>
        <begin position="563"/>
        <end position="577"/>
    </location>
</feature>
<feature type="turn" evidence="5">
    <location>
        <begin position="578"/>
        <end position="580"/>
    </location>
</feature>
<feature type="strand" evidence="5">
    <location>
        <begin position="582"/>
        <end position="586"/>
    </location>
</feature>
<feature type="strand" evidence="5">
    <location>
        <begin position="593"/>
        <end position="600"/>
    </location>
</feature>
<feature type="helix" evidence="5">
    <location>
        <begin position="602"/>
        <end position="608"/>
    </location>
</feature>
<feature type="helix" evidence="5">
    <location>
        <begin position="612"/>
        <end position="627"/>
    </location>
</feature>
<feature type="helix" evidence="5">
    <location>
        <begin position="650"/>
        <end position="652"/>
    </location>
</feature>
<feature type="helix" evidence="5">
    <location>
        <begin position="654"/>
        <end position="656"/>
    </location>
</feature>
<feature type="helix" evidence="5">
    <location>
        <begin position="659"/>
        <end position="672"/>
    </location>
</feature>
<feature type="helix" evidence="5">
    <location>
        <begin position="682"/>
        <end position="692"/>
    </location>
</feature>
<feature type="strand" evidence="6">
    <location>
        <begin position="695"/>
        <end position="697"/>
    </location>
</feature>
<feature type="strand" evidence="5">
    <location>
        <begin position="706"/>
        <end position="710"/>
    </location>
</feature>
<keyword id="KW-0002">3D-structure</keyword>
<keyword id="KW-0227">DNA damage</keyword>
<keyword id="KW-0234">DNA repair</keyword>
<keyword id="KW-0539">Nucleus</keyword>
<keyword id="KW-1185">Reference proteome</keyword>
<name>MLH3_YEAST</name>
<dbReference type="EMBL" id="X96770">
    <property type="protein sequence ID" value="CAA65557.1"/>
    <property type="molecule type" value="Genomic_DNA"/>
</dbReference>
<dbReference type="EMBL" id="Z73520">
    <property type="protein sequence ID" value="CAA97869.1"/>
    <property type="molecule type" value="Genomic_DNA"/>
</dbReference>
<dbReference type="EMBL" id="BK006949">
    <property type="protein sequence ID" value="DAA11270.1"/>
    <property type="molecule type" value="Genomic_DNA"/>
</dbReference>
<dbReference type="PIR" id="S65175">
    <property type="entry name" value="S65175"/>
</dbReference>
<dbReference type="RefSeq" id="NP_015161.1">
    <property type="nucleotide sequence ID" value="NM_001183978.1"/>
</dbReference>
<dbReference type="PDB" id="6RMN">
    <property type="method" value="X-ray"/>
    <property type="resolution" value="2.20 A"/>
    <property type="chains" value="B=477-714"/>
</dbReference>
<dbReference type="PDB" id="6SHX">
    <property type="method" value="X-ray"/>
    <property type="resolution" value="2.40 A"/>
    <property type="chains" value="B=477-715"/>
</dbReference>
<dbReference type="PDB" id="6SNS">
    <property type="method" value="X-ray"/>
    <property type="resolution" value="2.60 A"/>
    <property type="chains" value="B=477-715"/>
</dbReference>
<dbReference type="PDB" id="6SNV">
    <property type="method" value="X-ray"/>
    <property type="resolution" value="2.50 A"/>
    <property type="chains" value="B/E=477-715"/>
</dbReference>
<dbReference type="PDBsum" id="6RMN"/>
<dbReference type="PDBsum" id="6SHX"/>
<dbReference type="PDBsum" id="6SNS"/>
<dbReference type="PDBsum" id="6SNV"/>
<dbReference type="SMR" id="Q12083"/>
<dbReference type="BioGRID" id="36019">
    <property type="interactions" value="191"/>
</dbReference>
<dbReference type="ComplexPortal" id="CPX-1668">
    <property type="entry name" value="MLH1-MLH3 endonuclease complex"/>
</dbReference>
<dbReference type="DIP" id="DIP-2414N"/>
<dbReference type="FunCoup" id="Q12083">
    <property type="interactions" value="605"/>
</dbReference>
<dbReference type="IntAct" id="Q12083">
    <property type="interactions" value="17"/>
</dbReference>
<dbReference type="STRING" id="4932.YPL164C"/>
<dbReference type="iPTMnet" id="Q12083"/>
<dbReference type="PaxDb" id="4932-YPL164C"/>
<dbReference type="PeptideAtlas" id="Q12083"/>
<dbReference type="EnsemblFungi" id="YPL164C_mRNA">
    <property type="protein sequence ID" value="YPL164C"/>
    <property type="gene ID" value="YPL164C"/>
</dbReference>
<dbReference type="GeneID" id="855939"/>
<dbReference type="KEGG" id="sce:YPL164C"/>
<dbReference type="AGR" id="SGD:S000006085"/>
<dbReference type="SGD" id="S000006085">
    <property type="gene designation" value="MLH3"/>
</dbReference>
<dbReference type="VEuPathDB" id="FungiDB:YPL164C"/>
<dbReference type="eggNOG" id="KOG1977">
    <property type="taxonomic scope" value="Eukaryota"/>
</dbReference>
<dbReference type="GeneTree" id="ENSGT00800000124176"/>
<dbReference type="HOGENOM" id="CLU_005415_1_0_1"/>
<dbReference type="InParanoid" id="Q12083"/>
<dbReference type="OMA" id="FECAHGR"/>
<dbReference type="OrthoDB" id="429932at2759"/>
<dbReference type="BioCyc" id="YEAST:G3O-34060-MONOMER"/>
<dbReference type="BRENDA" id="3.6.1.3">
    <property type="organism ID" value="984"/>
</dbReference>
<dbReference type="BioGRID-ORCS" id="855939">
    <property type="hits" value="0 hits in 10 CRISPR screens"/>
</dbReference>
<dbReference type="PRO" id="PR:Q12083"/>
<dbReference type="Proteomes" id="UP000002311">
    <property type="component" value="Chromosome XVI"/>
</dbReference>
<dbReference type="RNAct" id="Q12083">
    <property type="molecule type" value="protein"/>
</dbReference>
<dbReference type="GO" id="GO:0032300">
    <property type="term" value="C:mismatch repair complex"/>
    <property type="evidence" value="ECO:0000318"/>
    <property type="project" value="GO_Central"/>
</dbReference>
<dbReference type="GO" id="GO:0097587">
    <property type="term" value="C:MutLgamma complex"/>
    <property type="evidence" value="ECO:0000353"/>
    <property type="project" value="ComplexPortal"/>
</dbReference>
<dbReference type="GO" id="GO:0005634">
    <property type="term" value="C:nucleus"/>
    <property type="evidence" value="ECO:0000353"/>
    <property type="project" value="SGD"/>
</dbReference>
<dbReference type="GO" id="GO:0005524">
    <property type="term" value="F:ATP binding"/>
    <property type="evidence" value="ECO:0007669"/>
    <property type="project" value="InterPro"/>
</dbReference>
<dbReference type="GO" id="GO:0016887">
    <property type="term" value="F:ATP hydrolysis activity"/>
    <property type="evidence" value="ECO:0000250"/>
    <property type="project" value="SGD"/>
</dbReference>
<dbReference type="GO" id="GO:0140664">
    <property type="term" value="F:ATP-dependent DNA damage sensor activity"/>
    <property type="evidence" value="ECO:0007669"/>
    <property type="project" value="InterPro"/>
</dbReference>
<dbReference type="GO" id="GO:0030983">
    <property type="term" value="F:mismatched DNA binding"/>
    <property type="evidence" value="ECO:0007669"/>
    <property type="project" value="InterPro"/>
</dbReference>
<dbReference type="GO" id="GO:0000710">
    <property type="term" value="P:meiotic mismatch repair"/>
    <property type="evidence" value="ECO:0000315"/>
    <property type="project" value="SGD"/>
</dbReference>
<dbReference type="GO" id="GO:0006298">
    <property type="term" value="P:mismatch repair"/>
    <property type="evidence" value="ECO:0000315"/>
    <property type="project" value="SGD"/>
</dbReference>
<dbReference type="GO" id="GO:0007131">
    <property type="term" value="P:reciprocal meiotic recombination"/>
    <property type="evidence" value="ECO:0000315"/>
    <property type="project" value="SGD"/>
</dbReference>
<dbReference type="CDD" id="cd16926">
    <property type="entry name" value="HATPase_MutL-MLH-PMS-like"/>
    <property type="match status" value="1"/>
</dbReference>
<dbReference type="CDD" id="cd03486">
    <property type="entry name" value="MutL_Trans_MLH3"/>
    <property type="match status" value="1"/>
</dbReference>
<dbReference type="FunFam" id="3.30.1540.20:FF:000010">
    <property type="entry name" value="Mlh3p"/>
    <property type="match status" value="1"/>
</dbReference>
<dbReference type="Gene3D" id="3.30.230.10">
    <property type="match status" value="1"/>
</dbReference>
<dbReference type="Gene3D" id="3.30.565.10">
    <property type="entry name" value="Histidine kinase-like ATPase, C-terminal domain"/>
    <property type="match status" value="1"/>
</dbReference>
<dbReference type="Gene3D" id="3.30.1540.20">
    <property type="entry name" value="MutL, C-terminal domain, dimerisation subdomain"/>
    <property type="match status" value="2"/>
</dbReference>
<dbReference type="InterPro" id="IPR013507">
    <property type="entry name" value="DNA_mismatch_S5_2-like"/>
</dbReference>
<dbReference type="InterPro" id="IPR036890">
    <property type="entry name" value="HATPase_C_sf"/>
</dbReference>
<dbReference type="InterPro" id="IPR002099">
    <property type="entry name" value="MutL/Mlh/PMS"/>
</dbReference>
<dbReference type="InterPro" id="IPR038973">
    <property type="entry name" value="MutL/Mlh/Pms-like"/>
</dbReference>
<dbReference type="InterPro" id="IPR014790">
    <property type="entry name" value="MutL_C"/>
</dbReference>
<dbReference type="InterPro" id="IPR042120">
    <property type="entry name" value="MutL_C_dimsub"/>
</dbReference>
<dbReference type="InterPro" id="IPR037198">
    <property type="entry name" value="MutL_C_sf"/>
</dbReference>
<dbReference type="InterPro" id="IPR020568">
    <property type="entry name" value="Ribosomal_Su5_D2-typ_SF"/>
</dbReference>
<dbReference type="InterPro" id="IPR014721">
    <property type="entry name" value="Ribsml_uS5_D2-typ_fold_subgr"/>
</dbReference>
<dbReference type="NCBIfam" id="TIGR00585">
    <property type="entry name" value="mutl"/>
    <property type="match status" value="1"/>
</dbReference>
<dbReference type="PANTHER" id="PTHR10073">
    <property type="entry name" value="DNA MISMATCH REPAIR PROTEIN MLH, PMS, MUTL"/>
    <property type="match status" value="1"/>
</dbReference>
<dbReference type="PANTHER" id="PTHR10073:SF47">
    <property type="entry name" value="DNA MISMATCH REPAIR PROTEIN MLH3"/>
    <property type="match status" value="1"/>
</dbReference>
<dbReference type="Pfam" id="PF13589">
    <property type="entry name" value="HATPase_c_3"/>
    <property type="match status" value="1"/>
</dbReference>
<dbReference type="SMART" id="SM01340">
    <property type="entry name" value="DNA_mis_repair"/>
    <property type="match status" value="1"/>
</dbReference>
<dbReference type="SMART" id="SM00853">
    <property type="entry name" value="MutL_C"/>
    <property type="match status" value="1"/>
</dbReference>
<dbReference type="SUPFAM" id="SSF55874">
    <property type="entry name" value="ATPase domain of HSP90 chaperone/DNA topoisomerase II/histidine kinase"/>
    <property type="match status" value="1"/>
</dbReference>
<dbReference type="SUPFAM" id="SSF118116">
    <property type="entry name" value="DNA mismatch repair protein MutL"/>
    <property type="match status" value="1"/>
</dbReference>
<dbReference type="SUPFAM" id="SSF54211">
    <property type="entry name" value="Ribosomal protein S5 domain 2-like"/>
    <property type="match status" value="1"/>
</dbReference>
<proteinExistence type="evidence at protein level"/>
<reference key="1">
    <citation type="journal article" date="1996" name="Yeast">
        <title>The sequence of 55 kb on the left arm of yeast chromosome XVI identifies a small nuclear RNA, a new putative protein kinase and two new putative regulators.</title>
        <authorList>
            <person name="Purnelle B."/>
            <person name="Coster F."/>
            <person name="Goffeau A."/>
        </authorList>
    </citation>
    <scope>NUCLEOTIDE SEQUENCE [GENOMIC DNA]</scope>
    <source>
        <strain>ATCC 204511 / S288c / AB972</strain>
    </source>
</reference>
<reference key="2">
    <citation type="journal article" date="1997" name="Nature">
        <title>The nucleotide sequence of Saccharomyces cerevisiae chromosome XVI.</title>
        <authorList>
            <person name="Bussey H."/>
            <person name="Storms R.K."/>
            <person name="Ahmed A."/>
            <person name="Albermann K."/>
            <person name="Allen E."/>
            <person name="Ansorge W."/>
            <person name="Araujo R."/>
            <person name="Aparicio A."/>
            <person name="Barrell B.G."/>
            <person name="Badcock K."/>
            <person name="Benes V."/>
            <person name="Botstein D."/>
            <person name="Bowman S."/>
            <person name="Brueckner M."/>
            <person name="Carpenter J."/>
            <person name="Cherry J.M."/>
            <person name="Chung E."/>
            <person name="Churcher C.M."/>
            <person name="Coster F."/>
            <person name="Davis K."/>
            <person name="Davis R.W."/>
            <person name="Dietrich F.S."/>
            <person name="Delius H."/>
            <person name="DiPaolo T."/>
            <person name="Dubois E."/>
            <person name="Duesterhoeft A."/>
            <person name="Duncan M."/>
            <person name="Floeth M."/>
            <person name="Fortin N."/>
            <person name="Friesen J.D."/>
            <person name="Fritz C."/>
            <person name="Goffeau A."/>
            <person name="Hall J."/>
            <person name="Hebling U."/>
            <person name="Heumann K."/>
            <person name="Hilbert H."/>
            <person name="Hillier L.W."/>
            <person name="Hunicke-Smith S."/>
            <person name="Hyman R.W."/>
            <person name="Johnston M."/>
            <person name="Kalman S."/>
            <person name="Kleine K."/>
            <person name="Komp C."/>
            <person name="Kurdi O."/>
            <person name="Lashkari D."/>
            <person name="Lew H."/>
            <person name="Lin A."/>
            <person name="Lin D."/>
            <person name="Louis E.J."/>
            <person name="Marathe R."/>
            <person name="Messenguy F."/>
            <person name="Mewes H.-W."/>
            <person name="Mirtipati S."/>
            <person name="Moestl D."/>
            <person name="Mueller-Auer S."/>
            <person name="Namath A."/>
            <person name="Nentwich U."/>
            <person name="Oefner P."/>
            <person name="Pearson D."/>
            <person name="Petel F.X."/>
            <person name="Pohl T.M."/>
            <person name="Purnelle B."/>
            <person name="Rajandream M.A."/>
            <person name="Rechmann S."/>
            <person name="Rieger M."/>
            <person name="Riles L."/>
            <person name="Roberts D."/>
            <person name="Schaefer M."/>
            <person name="Scharfe M."/>
            <person name="Scherens B."/>
            <person name="Schramm S."/>
            <person name="Schroeder M."/>
            <person name="Sdicu A.-M."/>
            <person name="Tettelin H."/>
            <person name="Urrestarazu L.A."/>
            <person name="Ushinsky S."/>
            <person name="Vierendeels F."/>
            <person name="Vissers S."/>
            <person name="Voss H."/>
            <person name="Walsh S.V."/>
            <person name="Wambutt R."/>
            <person name="Wang Y."/>
            <person name="Wedler E."/>
            <person name="Wedler H."/>
            <person name="Winnett E."/>
            <person name="Zhong W.-W."/>
            <person name="Zollner A."/>
            <person name="Vo D.H."/>
            <person name="Hani J."/>
        </authorList>
    </citation>
    <scope>NUCLEOTIDE SEQUENCE [LARGE SCALE GENOMIC DNA]</scope>
    <source>
        <strain>ATCC 204508 / S288c</strain>
    </source>
</reference>
<reference key="3">
    <citation type="journal article" date="2014" name="G3 (Bethesda)">
        <title>The reference genome sequence of Saccharomyces cerevisiae: Then and now.</title>
        <authorList>
            <person name="Engel S.R."/>
            <person name="Dietrich F.S."/>
            <person name="Fisk D.G."/>
            <person name="Binkley G."/>
            <person name="Balakrishnan R."/>
            <person name="Costanzo M.C."/>
            <person name="Dwight S.S."/>
            <person name="Hitz B.C."/>
            <person name="Karra K."/>
            <person name="Nash R.S."/>
            <person name="Weng S."/>
            <person name="Wong E.D."/>
            <person name="Lloyd P."/>
            <person name="Skrzypek M.S."/>
            <person name="Miyasato S.R."/>
            <person name="Simison M."/>
            <person name="Cherry J.M."/>
        </authorList>
    </citation>
    <scope>GENOME REANNOTATION</scope>
    <source>
        <strain>ATCC 204508 / S288c</strain>
    </source>
</reference>
<reference key="4">
    <citation type="journal article" date="1998" name="Proc. Natl. Acad. Sci. U.S.A.">
        <title>The Saccharomyces cerevisiae MLH3 gene functions in MSH3-dependent suppression of frameshift mutations.</title>
        <authorList>
            <person name="Flores-Rozas H."/>
            <person name="Kolodner R.D."/>
        </authorList>
    </citation>
    <scope>FUNCTION</scope>
    <scope>INTERACTION WITH MLH1</scope>
</reference>
<reference key="5">
    <citation type="journal article" date="1999" name="Proc. Natl. Acad. Sci. U.S.A.">
        <title>Functional specificity of MutL homologs in yeast: evidence for three Mlh1-based heterocomplexes with distinct roles during meiosis in recombination and mismatch correction.</title>
        <authorList>
            <person name="Wang T.-F."/>
            <person name="Kleckner N."/>
            <person name="Hunter N."/>
        </authorList>
    </citation>
    <scope>FUNCTION</scope>
    <scope>INTERACTION WITH MLH1</scope>
</reference>
<reference key="6">
    <citation type="journal article" date="2000" name="Curr. Biol.">
        <title>Discrete in vivo roles for the MutL homologs Mlh2p and Mlh3p in the removal of frameshift intermediates in budding yeast.</title>
        <authorList>
            <person name="Harfe B.D."/>
            <person name="Minesinger B.K."/>
            <person name="Jinks-Robertson S."/>
        </authorList>
    </citation>
    <scope>FUNCTION</scope>
</reference>
<reference key="7">
    <citation type="journal article" date="2002" name="Biochem. Biophys. Res. Commun.">
        <title>Supercomplex formation between Mlh1-Mlh3 and Sgs1-Top3 heterocomplexes in meiotic yeast cells.</title>
        <authorList>
            <person name="Wang T.-F."/>
            <person name="Kung W.M."/>
        </authorList>
    </citation>
    <scope>INTERACTION WITH SGS1</scope>
</reference>
<accession>Q12083</accession>
<accession>D6W3K4</accession>